<feature type="chain" id="PRO_0000202133" description="Cysteine desulfuration protein SufE">
    <location>
        <begin position="1"/>
        <end position="144"/>
    </location>
</feature>
<feature type="active site" description="Cysteine persulfide intermediate" evidence="1">
    <location>
        <position position="51"/>
    </location>
</feature>
<evidence type="ECO:0000255" key="1">
    <source>
        <dbReference type="HAMAP-Rule" id="MF_01832"/>
    </source>
</evidence>
<keyword id="KW-0963">Cytoplasm</keyword>
<keyword id="KW-1185">Reference proteome</keyword>
<reference key="1">
    <citation type="journal article" date="2002" name="Nat. Genet.">
        <title>Genome sequence of the endocellular obligate symbiont of tsetse flies, Wigglesworthia glossinidia.</title>
        <authorList>
            <person name="Akman L."/>
            <person name="Yamashita A."/>
            <person name="Watanabe H."/>
            <person name="Oshima K."/>
            <person name="Shiba T."/>
            <person name="Hattori M."/>
            <person name="Aksoy S."/>
        </authorList>
    </citation>
    <scope>NUCLEOTIDE SEQUENCE [LARGE SCALE GENOMIC DNA]</scope>
</reference>
<gene>
    <name evidence="1" type="primary">sufE</name>
    <name type="ordered locus">WIGBR3560</name>
</gene>
<name>SUFE_WIGBR</name>
<proteinExistence type="inferred from homology"/>
<organism>
    <name type="scientific">Wigglesworthia glossinidia brevipalpis</name>
    <dbReference type="NCBI Taxonomy" id="36870"/>
    <lineage>
        <taxon>Bacteria</taxon>
        <taxon>Pseudomonadati</taxon>
        <taxon>Pseudomonadota</taxon>
        <taxon>Gammaproteobacteria</taxon>
        <taxon>Enterobacterales</taxon>
        <taxon>Erwiniaceae</taxon>
        <taxon>Wigglesworthia</taxon>
    </lineage>
</organism>
<protein>
    <recommendedName>
        <fullName evidence="1">Cysteine desulfuration protein SufE</fullName>
    </recommendedName>
</protein>
<comment type="function">
    <text evidence="1">Participates in cysteine desulfuration mediated by SufS. Cysteine desulfuration mobilizes sulfur from L-cysteine to yield L-alanine and constitutes an essential step in sulfur metabolism for biosynthesis of a variety of sulfur-containing biomolecules. Functions as a sulfur acceptor for SufS, by mediating the direct transfer of the sulfur atom from the S-sulfanylcysteine of SufS, an intermediate product of cysteine desulfuration process.</text>
</comment>
<comment type="pathway">
    <text evidence="1">Cofactor biosynthesis; iron-sulfur cluster biosynthesis.</text>
</comment>
<comment type="subunit">
    <text evidence="1">Homodimer. Interacts with SufS.</text>
</comment>
<comment type="subcellular location">
    <subcellularLocation>
        <location evidence="1">Cytoplasm</location>
    </subcellularLocation>
</comment>
<comment type="similarity">
    <text evidence="1">Belongs to the SufE family.</text>
</comment>
<dbReference type="EMBL" id="BA000021">
    <property type="protein sequence ID" value="BAC24502.1"/>
    <property type="molecule type" value="Genomic_DNA"/>
</dbReference>
<dbReference type="SMR" id="Q8D2J8"/>
<dbReference type="STRING" id="36870.gene:10368856"/>
<dbReference type="KEGG" id="wbr:ynhA"/>
<dbReference type="eggNOG" id="COG2166">
    <property type="taxonomic scope" value="Bacteria"/>
</dbReference>
<dbReference type="HOGENOM" id="CLU_124502_1_1_6"/>
<dbReference type="OrthoDB" id="9799320at2"/>
<dbReference type="UniPathway" id="UPA00266"/>
<dbReference type="Proteomes" id="UP000000562">
    <property type="component" value="Chromosome"/>
</dbReference>
<dbReference type="GO" id="GO:0005737">
    <property type="term" value="C:cytoplasm"/>
    <property type="evidence" value="ECO:0007669"/>
    <property type="project" value="UniProtKB-SubCell"/>
</dbReference>
<dbReference type="GO" id="GO:0016226">
    <property type="term" value="P:iron-sulfur cluster assembly"/>
    <property type="evidence" value="ECO:0007669"/>
    <property type="project" value="InterPro"/>
</dbReference>
<dbReference type="GO" id="GO:0006790">
    <property type="term" value="P:sulfur compound metabolic process"/>
    <property type="evidence" value="ECO:0007669"/>
    <property type="project" value="InterPro"/>
</dbReference>
<dbReference type="Gene3D" id="3.90.1010.10">
    <property type="match status" value="1"/>
</dbReference>
<dbReference type="HAMAP" id="MF_01832">
    <property type="entry name" value="SufE"/>
    <property type="match status" value="1"/>
</dbReference>
<dbReference type="InterPro" id="IPR023939">
    <property type="entry name" value="Cysteine_desulfuration_SufE"/>
</dbReference>
<dbReference type="InterPro" id="IPR003808">
    <property type="entry name" value="Fe-S_metab-assoc_dom"/>
</dbReference>
<dbReference type="NCBIfam" id="NF006792">
    <property type="entry name" value="PRK09296.1"/>
    <property type="match status" value="1"/>
</dbReference>
<dbReference type="PANTHER" id="PTHR43597:SF3">
    <property type="entry name" value="CYSTEINE DESULFURATION PROTEIN SUFE"/>
    <property type="match status" value="1"/>
</dbReference>
<dbReference type="PANTHER" id="PTHR43597">
    <property type="entry name" value="SULFUR ACCEPTOR PROTEIN CSDE"/>
    <property type="match status" value="1"/>
</dbReference>
<dbReference type="Pfam" id="PF02657">
    <property type="entry name" value="SufE"/>
    <property type="match status" value="1"/>
</dbReference>
<dbReference type="SUPFAM" id="SSF82649">
    <property type="entry name" value="SufE/NifU"/>
    <property type="match status" value="1"/>
</dbReference>
<accession>Q8D2J8</accession>
<sequence length="144" mass="16883">MNKFIKKINFIKNFSSCENWEEKYLYIIELGNKLSPFPEKFRKNSNLIPGCQNDSWIYLIYENTKKIKFYGDSNSLIVKGLIAIIFILHEDLKLSEILTFDVKPYFNKLSLTNYLTPSRVQGLSSISKFIKKSARCLLIKEKIL</sequence>